<name>TATB_HAHCH</name>
<gene>
    <name evidence="1" type="primary">tatB</name>
    <name type="ordered locus">HCH_01075</name>
</gene>
<sequence>MFDIGFPELALVAVIGLLVLGPERLPYAARKTGLWVGRIRRMVSQMSSEIDRQLKAEEMRERLRKEGDTLGLEKIQQTVNEALAEAKKYEDMVEKNPATPMSSKASTPQTPSSGPDPQPVESHSHSDDASKQHDRS</sequence>
<feature type="chain" id="PRO_0000301174" description="Sec-independent protein translocase protein TatB">
    <location>
        <begin position="1"/>
        <end position="136"/>
    </location>
</feature>
<feature type="transmembrane region" description="Helical" evidence="1">
    <location>
        <begin position="1"/>
        <end position="21"/>
    </location>
</feature>
<feature type="region of interest" description="Disordered" evidence="2">
    <location>
        <begin position="89"/>
        <end position="136"/>
    </location>
</feature>
<feature type="compositionally biased region" description="Polar residues" evidence="2">
    <location>
        <begin position="99"/>
        <end position="115"/>
    </location>
</feature>
<feature type="compositionally biased region" description="Basic and acidic residues" evidence="2">
    <location>
        <begin position="122"/>
        <end position="136"/>
    </location>
</feature>
<proteinExistence type="inferred from homology"/>
<comment type="function">
    <text evidence="1">Part of the twin-arginine translocation (Tat) system that transports large folded proteins containing a characteristic twin-arginine motif in their signal peptide across membranes. Together with TatC, TatB is part of a receptor directly interacting with Tat signal peptides. TatB may form an oligomeric binding site that transiently accommodates folded Tat precursor proteins before their translocation.</text>
</comment>
<comment type="subunit">
    <text evidence="1">The Tat system comprises two distinct complexes: a TatABC complex, containing multiple copies of TatA, TatB and TatC subunits, and a separate TatA complex, containing only TatA subunits. Substrates initially bind to the TatABC complex, which probably triggers association of the separate TatA complex to form the active translocon.</text>
</comment>
<comment type="subcellular location">
    <subcellularLocation>
        <location evidence="1">Cell inner membrane</location>
        <topology evidence="1">Single-pass membrane protein</topology>
    </subcellularLocation>
</comment>
<comment type="similarity">
    <text evidence="1">Belongs to the TatB family.</text>
</comment>
<reference key="1">
    <citation type="journal article" date="2005" name="Nucleic Acids Res.">
        <title>Genomic blueprint of Hahella chejuensis, a marine microbe producing an algicidal agent.</title>
        <authorList>
            <person name="Jeong H."/>
            <person name="Yim J.H."/>
            <person name="Lee C."/>
            <person name="Choi S.-H."/>
            <person name="Park Y.K."/>
            <person name="Yoon S.H."/>
            <person name="Hur C.-G."/>
            <person name="Kang H.-Y."/>
            <person name="Kim D."/>
            <person name="Lee H.H."/>
            <person name="Park K.H."/>
            <person name="Park S.-H."/>
            <person name="Park H.-S."/>
            <person name="Lee H.K."/>
            <person name="Oh T.K."/>
            <person name="Kim J.F."/>
        </authorList>
    </citation>
    <scope>NUCLEOTIDE SEQUENCE [LARGE SCALE GENOMIC DNA]</scope>
    <source>
        <strain>KCTC 2396</strain>
    </source>
</reference>
<evidence type="ECO:0000255" key="1">
    <source>
        <dbReference type="HAMAP-Rule" id="MF_00237"/>
    </source>
</evidence>
<evidence type="ECO:0000256" key="2">
    <source>
        <dbReference type="SAM" id="MobiDB-lite"/>
    </source>
</evidence>
<dbReference type="EMBL" id="CP000155">
    <property type="protein sequence ID" value="ABC27956.1"/>
    <property type="molecule type" value="Genomic_DNA"/>
</dbReference>
<dbReference type="RefSeq" id="WP_011395031.1">
    <property type="nucleotide sequence ID" value="NC_007645.1"/>
</dbReference>
<dbReference type="SMR" id="Q2SN18"/>
<dbReference type="STRING" id="349521.HCH_01075"/>
<dbReference type="KEGG" id="hch:HCH_01075"/>
<dbReference type="eggNOG" id="COG1826">
    <property type="taxonomic scope" value="Bacteria"/>
</dbReference>
<dbReference type="HOGENOM" id="CLU_086034_1_1_6"/>
<dbReference type="OrthoDB" id="9816005at2"/>
<dbReference type="Proteomes" id="UP000000238">
    <property type="component" value="Chromosome"/>
</dbReference>
<dbReference type="GO" id="GO:0033281">
    <property type="term" value="C:TAT protein transport complex"/>
    <property type="evidence" value="ECO:0007669"/>
    <property type="project" value="UniProtKB-UniRule"/>
</dbReference>
<dbReference type="GO" id="GO:0008320">
    <property type="term" value="F:protein transmembrane transporter activity"/>
    <property type="evidence" value="ECO:0007669"/>
    <property type="project" value="UniProtKB-UniRule"/>
</dbReference>
<dbReference type="GO" id="GO:0043953">
    <property type="term" value="P:protein transport by the Tat complex"/>
    <property type="evidence" value="ECO:0007669"/>
    <property type="project" value="UniProtKB-UniRule"/>
</dbReference>
<dbReference type="Gene3D" id="1.20.5.3310">
    <property type="match status" value="1"/>
</dbReference>
<dbReference type="HAMAP" id="MF_00237">
    <property type="entry name" value="TatB"/>
    <property type="match status" value="1"/>
</dbReference>
<dbReference type="InterPro" id="IPR003369">
    <property type="entry name" value="TatA/B/E"/>
</dbReference>
<dbReference type="InterPro" id="IPR018448">
    <property type="entry name" value="TatB"/>
</dbReference>
<dbReference type="NCBIfam" id="TIGR01410">
    <property type="entry name" value="tatB"/>
    <property type="match status" value="1"/>
</dbReference>
<dbReference type="PANTHER" id="PTHR33162">
    <property type="entry name" value="SEC-INDEPENDENT PROTEIN TRANSLOCASE PROTEIN TATA, CHLOROPLASTIC"/>
    <property type="match status" value="1"/>
</dbReference>
<dbReference type="PANTHER" id="PTHR33162:SF1">
    <property type="entry name" value="SEC-INDEPENDENT PROTEIN TRANSLOCASE PROTEIN TATA, CHLOROPLASTIC"/>
    <property type="match status" value="1"/>
</dbReference>
<dbReference type="Pfam" id="PF02416">
    <property type="entry name" value="TatA_B_E"/>
    <property type="match status" value="1"/>
</dbReference>
<dbReference type="PRINTS" id="PR01506">
    <property type="entry name" value="TATBPROTEIN"/>
</dbReference>
<protein>
    <recommendedName>
        <fullName evidence="1">Sec-independent protein translocase protein TatB</fullName>
    </recommendedName>
</protein>
<keyword id="KW-0997">Cell inner membrane</keyword>
<keyword id="KW-1003">Cell membrane</keyword>
<keyword id="KW-0472">Membrane</keyword>
<keyword id="KW-0653">Protein transport</keyword>
<keyword id="KW-1185">Reference proteome</keyword>
<keyword id="KW-0811">Translocation</keyword>
<keyword id="KW-0812">Transmembrane</keyword>
<keyword id="KW-1133">Transmembrane helix</keyword>
<keyword id="KW-0813">Transport</keyword>
<organism>
    <name type="scientific">Hahella chejuensis (strain KCTC 2396)</name>
    <dbReference type="NCBI Taxonomy" id="349521"/>
    <lineage>
        <taxon>Bacteria</taxon>
        <taxon>Pseudomonadati</taxon>
        <taxon>Pseudomonadota</taxon>
        <taxon>Gammaproteobacteria</taxon>
        <taxon>Oceanospirillales</taxon>
        <taxon>Hahellaceae</taxon>
        <taxon>Hahella</taxon>
    </lineage>
</organism>
<accession>Q2SN18</accession>